<accession>B2IKW1</accession>
<dbReference type="EC" id="2.1.1.177" evidence="1"/>
<dbReference type="EMBL" id="CP001016">
    <property type="protein sequence ID" value="ACB96501.1"/>
    <property type="status" value="ALT_INIT"/>
    <property type="molecule type" value="Genomic_DNA"/>
</dbReference>
<dbReference type="RefSeq" id="WP_041778129.1">
    <property type="nucleotide sequence ID" value="NC_010581.1"/>
</dbReference>
<dbReference type="SMR" id="B2IKW1"/>
<dbReference type="STRING" id="395963.Bind_2933"/>
<dbReference type="KEGG" id="bid:Bind_2933"/>
<dbReference type="eggNOG" id="COG1576">
    <property type="taxonomic scope" value="Bacteria"/>
</dbReference>
<dbReference type="HOGENOM" id="CLU_100552_1_1_5"/>
<dbReference type="OrthoDB" id="9806643at2"/>
<dbReference type="Proteomes" id="UP000001695">
    <property type="component" value="Chromosome"/>
</dbReference>
<dbReference type="GO" id="GO:0005737">
    <property type="term" value="C:cytoplasm"/>
    <property type="evidence" value="ECO:0007669"/>
    <property type="project" value="UniProtKB-SubCell"/>
</dbReference>
<dbReference type="GO" id="GO:0070038">
    <property type="term" value="F:rRNA (pseudouridine-N3-)-methyltransferase activity"/>
    <property type="evidence" value="ECO:0007669"/>
    <property type="project" value="UniProtKB-UniRule"/>
</dbReference>
<dbReference type="CDD" id="cd18081">
    <property type="entry name" value="RlmH-like"/>
    <property type="match status" value="1"/>
</dbReference>
<dbReference type="Gene3D" id="3.40.1280.10">
    <property type="match status" value="1"/>
</dbReference>
<dbReference type="HAMAP" id="MF_00658">
    <property type="entry name" value="23SrRNA_methyltr_H"/>
    <property type="match status" value="1"/>
</dbReference>
<dbReference type="InterPro" id="IPR029028">
    <property type="entry name" value="Alpha/beta_knot_MTases"/>
</dbReference>
<dbReference type="InterPro" id="IPR003742">
    <property type="entry name" value="RlmH-like"/>
</dbReference>
<dbReference type="InterPro" id="IPR029026">
    <property type="entry name" value="tRNA_m1G_MTases_N"/>
</dbReference>
<dbReference type="NCBIfam" id="NF000989">
    <property type="entry name" value="PRK00103.2-3"/>
    <property type="match status" value="1"/>
</dbReference>
<dbReference type="PANTHER" id="PTHR33603">
    <property type="entry name" value="METHYLTRANSFERASE"/>
    <property type="match status" value="1"/>
</dbReference>
<dbReference type="PANTHER" id="PTHR33603:SF1">
    <property type="entry name" value="RIBOSOMAL RNA LARGE SUBUNIT METHYLTRANSFERASE H"/>
    <property type="match status" value="1"/>
</dbReference>
<dbReference type="Pfam" id="PF02590">
    <property type="entry name" value="SPOUT_MTase"/>
    <property type="match status" value="1"/>
</dbReference>
<dbReference type="PIRSF" id="PIRSF004505">
    <property type="entry name" value="MT_bac"/>
    <property type="match status" value="1"/>
</dbReference>
<dbReference type="SUPFAM" id="SSF75217">
    <property type="entry name" value="alpha/beta knot"/>
    <property type="match status" value="1"/>
</dbReference>
<comment type="function">
    <text evidence="1">Specifically methylates the pseudouridine at position 1915 (m3Psi1915) in 23S rRNA.</text>
</comment>
<comment type="catalytic activity">
    <reaction evidence="1">
        <text>pseudouridine(1915) in 23S rRNA + S-adenosyl-L-methionine = N(3)-methylpseudouridine(1915) in 23S rRNA + S-adenosyl-L-homocysteine + H(+)</text>
        <dbReference type="Rhea" id="RHEA:42752"/>
        <dbReference type="Rhea" id="RHEA-COMP:10221"/>
        <dbReference type="Rhea" id="RHEA-COMP:10222"/>
        <dbReference type="ChEBI" id="CHEBI:15378"/>
        <dbReference type="ChEBI" id="CHEBI:57856"/>
        <dbReference type="ChEBI" id="CHEBI:59789"/>
        <dbReference type="ChEBI" id="CHEBI:65314"/>
        <dbReference type="ChEBI" id="CHEBI:74486"/>
        <dbReference type="EC" id="2.1.1.177"/>
    </reaction>
</comment>
<comment type="subunit">
    <text evidence="1">Homodimer.</text>
</comment>
<comment type="subcellular location">
    <subcellularLocation>
        <location evidence="1">Cytoplasm</location>
    </subcellularLocation>
</comment>
<comment type="similarity">
    <text evidence="1">Belongs to the RNA methyltransferase RlmH family.</text>
</comment>
<comment type="sequence caution" evidence="2">
    <conflict type="erroneous initiation">
        <sequence resource="EMBL-CDS" id="ACB96501"/>
    </conflict>
</comment>
<organism>
    <name type="scientific">Beijerinckia indica subsp. indica (strain ATCC 9039 / DSM 1715 / NCIMB 8712)</name>
    <dbReference type="NCBI Taxonomy" id="395963"/>
    <lineage>
        <taxon>Bacteria</taxon>
        <taxon>Pseudomonadati</taxon>
        <taxon>Pseudomonadota</taxon>
        <taxon>Alphaproteobacteria</taxon>
        <taxon>Hyphomicrobiales</taxon>
        <taxon>Beijerinckiaceae</taxon>
        <taxon>Beijerinckia</taxon>
    </lineage>
</organism>
<feature type="chain" id="PRO_0000366563" description="Ribosomal RNA large subunit methyltransferase H">
    <location>
        <begin position="1"/>
        <end position="160"/>
    </location>
</feature>
<feature type="binding site" evidence="1">
    <location>
        <position position="108"/>
    </location>
    <ligand>
        <name>S-adenosyl-L-methionine</name>
        <dbReference type="ChEBI" id="CHEBI:59789"/>
    </ligand>
</feature>
<feature type="binding site" evidence="1">
    <location>
        <begin position="127"/>
        <end position="132"/>
    </location>
    <ligand>
        <name>S-adenosyl-L-methionine</name>
        <dbReference type="ChEBI" id="CHEBI:59789"/>
    </ligand>
</feature>
<evidence type="ECO:0000255" key="1">
    <source>
        <dbReference type="HAMAP-Rule" id="MF_00658"/>
    </source>
</evidence>
<evidence type="ECO:0000305" key="2"/>
<reference key="1">
    <citation type="journal article" date="2010" name="J. Bacteriol.">
        <title>Complete genome sequence of Beijerinckia indica subsp. indica.</title>
        <authorList>
            <person name="Tamas I."/>
            <person name="Dedysh S.N."/>
            <person name="Liesack W."/>
            <person name="Stott M.B."/>
            <person name="Alam M."/>
            <person name="Murrell J.C."/>
            <person name="Dunfield P.F."/>
        </authorList>
    </citation>
    <scope>NUCLEOTIDE SEQUENCE [LARGE SCALE GENOMIC DNA]</scope>
    <source>
        <strain>ATCC 9039 / DSM 1715 / NCIMB 8712</strain>
    </source>
</reference>
<keyword id="KW-0963">Cytoplasm</keyword>
<keyword id="KW-0489">Methyltransferase</keyword>
<keyword id="KW-1185">Reference proteome</keyword>
<keyword id="KW-0698">rRNA processing</keyword>
<keyword id="KW-0949">S-adenosyl-L-methionine</keyword>
<keyword id="KW-0808">Transferase</keyword>
<proteinExistence type="inferred from homology"/>
<name>RLMH_BEII9</name>
<protein>
    <recommendedName>
        <fullName evidence="1">Ribosomal RNA large subunit methyltransferase H</fullName>
        <ecNumber evidence="1">2.1.1.177</ecNumber>
    </recommendedName>
    <alternativeName>
        <fullName evidence="1">23S rRNA (pseudouridine1915-N3)-methyltransferase</fullName>
    </alternativeName>
    <alternativeName>
        <fullName evidence="1">23S rRNA m3Psi1915 methyltransferase</fullName>
    </alternativeName>
    <alternativeName>
        <fullName evidence="1">rRNA (pseudouridine-N3-)-methyltransferase RlmH</fullName>
    </alternativeName>
</protein>
<sequence length="160" mass="17630">MRLQLIGIGRTKAGAERELTARYLERAGQAGRAIGFPSVELREIEESRARRGDERKAQEGKAIRALLQPASLIVAFDEHGRSIDSEGFADCLGQARDSGKAMMHFLIGGADGLEPALTESAAFVFAFGKMTWPHQLVRIMAAEQIYRAMTILGHHPYHRA</sequence>
<gene>
    <name evidence="1" type="primary">rlmH</name>
    <name type="ordered locus">Bind_2933</name>
</gene>